<organism>
    <name type="scientific">Locusta migratoria</name>
    <name type="common">Migratory locust</name>
    <dbReference type="NCBI Taxonomy" id="7004"/>
    <lineage>
        <taxon>Eukaryota</taxon>
        <taxon>Metazoa</taxon>
        <taxon>Ecdysozoa</taxon>
        <taxon>Arthropoda</taxon>
        <taxon>Hexapoda</taxon>
        <taxon>Insecta</taxon>
        <taxon>Pterygota</taxon>
        <taxon>Neoptera</taxon>
        <taxon>Polyneoptera</taxon>
        <taxon>Orthoptera</taxon>
        <taxon>Caelifera</taxon>
        <taxon>Acrididea</taxon>
        <taxon>Acridomorpha</taxon>
        <taxon>Acridoidea</taxon>
        <taxon>Acrididae</taxon>
        <taxon>Oedipodinae</taxon>
        <taxon>Locusta</taxon>
    </lineage>
</organism>
<accession>P82168</accession>
<proteinExistence type="evidence at protein level"/>
<comment type="function">
    <text evidence="2">Component of the cuticle of migratory locust which contains more than 100 different structural proteins.</text>
</comment>
<comment type="mass spectrometry" mass="4921.3" method="Plasma desorption" evidence="1"/>
<keyword id="KW-0193">Cuticle</keyword>
<keyword id="KW-0903">Direct protein sequencing</keyword>
<feature type="chain" id="PRO_0000252031" description="Cuticle protein 4.9">
    <location>
        <begin position="1"/>
        <end position="46"/>
    </location>
</feature>
<dbReference type="GO" id="GO:0042302">
    <property type="term" value="F:structural constituent of cuticle"/>
    <property type="evidence" value="ECO:0007669"/>
    <property type="project" value="UniProtKB-KW"/>
</dbReference>
<evidence type="ECO:0000269" key="1">
    <source>
    </source>
</evidence>
<evidence type="ECO:0000305" key="2"/>
<sequence length="46" mass="4922">AVYVASPYAAGYGYAYPYAAAAYRAAPVVGAYAAYPYGVATYPYYY</sequence>
<name>CU049_LOCMI</name>
<reference evidence="2" key="1">
    <citation type="journal article" date="2000" name="Insect Biochem. Mol. Biol.">
        <title>Studies on proteins in post-ecdysial nymphal cuticle of locust, Locusta migratoria, and cockroach, Blaberus craniifer.</title>
        <authorList>
            <person name="Andersen S.O."/>
        </authorList>
    </citation>
    <scope>PROTEIN SEQUENCE</scope>
    <scope>MASS SPECTROMETRY</scope>
    <source>
        <tissue evidence="1">Fifth instar larvae cuticle</tissue>
    </source>
</reference>
<protein>
    <recommendedName>
        <fullName>Cuticle protein 4.9</fullName>
    </recommendedName>
    <alternativeName>
        <fullName>LmNCP4.9</fullName>
    </alternativeName>
</protein>